<proteinExistence type="evidence at protein level"/>
<feature type="chain" id="PRO_0000448470" description="Collagen alpha-1(I) chain">
    <location>
        <begin position="1"/>
        <end position="998"/>
    </location>
</feature>
<feature type="region of interest" description="Disordered" evidence="5">
    <location>
        <begin position="1"/>
        <end position="998"/>
    </location>
</feature>
<feature type="compositionally biased region" description="Low complexity" evidence="5">
    <location>
        <begin position="9"/>
        <end position="22"/>
    </location>
</feature>
<feature type="compositionally biased region" description="Basic and acidic residues" evidence="5">
    <location>
        <begin position="62"/>
        <end position="76"/>
    </location>
</feature>
<feature type="compositionally biased region" description="Low complexity" evidence="5">
    <location>
        <begin position="112"/>
        <end position="128"/>
    </location>
</feature>
<feature type="compositionally biased region" description="Low complexity" evidence="5">
    <location>
        <begin position="146"/>
        <end position="164"/>
    </location>
</feature>
<feature type="compositionally biased region" description="Pro residues" evidence="5">
    <location>
        <begin position="166"/>
        <end position="178"/>
    </location>
</feature>
<feature type="compositionally biased region" description="Low complexity" evidence="5">
    <location>
        <begin position="212"/>
        <end position="251"/>
    </location>
</feature>
<feature type="compositionally biased region" description="Gly residues" evidence="5">
    <location>
        <begin position="318"/>
        <end position="327"/>
    </location>
</feature>
<feature type="compositionally biased region" description="Low complexity" evidence="5">
    <location>
        <begin position="371"/>
        <end position="397"/>
    </location>
</feature>
<feature type="compositionally biased region" description="Low complexity" evidence="5">
    <location>
        <begin position="406"/>
        <end position="425"/>
    </location>
</feature>
<feature type="compositionally biased region" description="Low complexity" evidence="5">
    <location>
        <begin position="484"/>
        <end position="493"/>
    </location>
</feature>
<feature type="compositionally biased region" description="Low complexity" evidence="5">
    <location>
        <begin position="597"/>
        <end position="611"/>
    </location>
</feature>
<feature type="compositionally biased region" description="Low complexity" evidence="5">
    <location>
        <begin position="624"/>
        <end position="651"/>
    </location>
</feature>
<feature type="compositionally biased region" description="Pro residues" evidence="5">
    <location>
        <begin position="653"/>
        <end position="665"/>
    </location>
</feature>
<feature type="compositionally biased region" description="Low complexity" evidence="5">
    <location>
        <begin position="680"/>
        <end position="696"/>
    </location>
</feature>
<feature type="compositionally biased region" description="Low complexity" evidence="5">
    <location>
        <begin position="725"/>
        <end position="734"/>
    </location>
</feature>
<feature type="compositionally biased region" description="Low complexity" evidence="5">
    <location>
        <begin position="746"/>
        <end position="758"/>
    </location>
</feature>
<feature type="compositionally biased region" description="Pro residues" evidence="5">
    <location>
        <begin position="808"/>
        <end position="818"/>
    </location>
</feature>
<feature type="compositionally biased region" description="Pro residues" evidence="5">
    <location>
        <begin position="853"/>
        <end position="868"/>
    </location>
</feature>
<feature type="compositionally biased region" description="Low complexity" evidence="5">
    <location>
        <begin position="889"/>
        <end position="903"/>
    </location>
</feature>
<feature type="compositionally biased region" description="Basic and acidic residues" evidence="5">
    <location>
        <begin position="904"/>
        <end position="918"/>
    </location>
</feature>
<feature type="compositionally biased region" description="Low complexity" evidence="5">
    <location>
        <begin position="937"/>
        <end position="970"/>
    </location>
</feature>
<feature type="compositionally biased region" description="Pro residues" evidence="5">
    <location>
        <begin position="988"/>
        <end position="998"/>
    </location>
</feature>
<feature type="modified residue" description="4-hydroxyproline" evidence="3">
    <location>
        <position position="25"/>
    </location>
</feature>
<feature type="modified residue" description="4-hydroxyproline" evidence="3">
    <location>
        <position position="28"/>
    </location>
</feature>
<feature type="modified residue" description="4-hydroxyproline" evidence="3">
    <location>
        <position position="30"/>
    </location>
</feature>
<feature type="modified residue" description="4-hydroxyproline" evidence="3">
    <location>
        <position position="39"/>
    </location>
</feature>
<feature type="modified residue" description="4-hydroxyproline" evidence="3">
    <location>
        <position position="42"/>
    </location>
</feature>
<feature type="modified residue" description="4-hydroxyproline" evidence="3">
    <location>
        <position position="45"/>
    </location>
</feature>
<feature type="modified residue" description="4-hydroxyproline" evidence="3">
    <location>
        <position position="59"/>
    </location>
</feature>
<feature type="modified residue" description="4-hydroxyproline" evidence="3">
    <location>
        <position position="74"/>
    </location>
</feature>
<feature type="modified residue" description="4-hydroxyproline" evidence="3">
    <location>
        <position position="80"/>
    </location>
</feature>
<feature type="modified residue" description="4-hydroxyproline" evidence="3">
    <location>
        <position position="89"/>
    </location>
</feature>
<feature type="modified residue" description="4-hydroxyproline" evidence="3">
    <location>
        <position position="95"/>
    </location>
</feature>
<feature type="modified residue" description="5-hydroxylysine; alternate" evidence="1">
    <location>
        <position position="98"/>
    </location>
</feature>
<feature type="modified residue" description="Phosphoserine" evidence="2">
    <location>
        <position position="104"/>
    </location>
</feature>
<feature type="modified residue" description="4-hydroxyproline" evidence="3">
    <location>
        <position position="122"/>
    </location>
</feature>
<feature type="modified residue" description="4-hydroxyproline" evidence="3">
    <location>
        <position position="125"/>
    </location>
</feature>
<feature type="modified residue" description="4-hydroxyproline" evidence="3">
    <location>
        <position position="131"/>
    </location>
</feature>
<feature type="modified residue" description="4-hydroxyproline" evidence="3">
    <location>
        <position position="140"/>
    </location>
</feature>
<feature type="modified residue" description="4-hydroxyproline" evidence="3">
    <location>
        <position position="146"/>
    </location>
</feature>
<feature type="modified residue" description="4-hydroxyproline" evidence="3">
    <location>
        <position position="167"/>
    </location>
</feature>
<feature type="modified residue" description="4-hydroxyproline" evidence="3">
    <location>
        <position position="176"/>
    </location>
</feature>
<feature type="modified residue" description="4-hydroxyproline" evidence="3">
    <location>
        <position position="179"/>
    </location>
</feature>
<feature type="modified residue" description="4-hydroxyproline" evidence="3">
    <location>
        <position position="206"/>
    </location>
</feature>
<feature type="modified residue" description="4-hydroxyproline" evidence="3">
    <location>
        <position position="209"/>
    </location>
</feature>
<feature type="modified residue" description="4-hydroxyproline" evidence="3">
    <location>
        <position position="221"/>
    </location>
</feature>
<feature type="modified residue" description="4-hydroxyproline" evidence="3">
    <location>
        <position position="227"/>
    </location>
</feature>
<feature type="modified residue" description="4-hydroxyproline" evidence="3">
    <location>
        <position position="236"/>
    </location>
</feature>
<feature type="modified residue" description="4-hydroxyproline" evidence="3">
    <location>
        <position position="242"/>
    </location>
</feature>
<feature type="modified residue" description="4-hydroxyproline" evidence="3">
    <location>
        <position position="245"/>
    </location>
</feature>
<feature type="modified residue" description="4-hydroxyproline" evidence="3">
    <location>
        <position position="260"/>
    </location>
</feature>
<feature type="modified residue" description="5-hydroxylysine" evidence="3">
    <location>
        <position position="263"/>
    </location>
</feature>
<feature type="modified residue" description="4-hydroxyproline" evidence="3">
    <location>
        <position position="269"/>
    </location>
</feature>
<feature type="modified residue" description="4-hydroxyproline" evidence="3">
    <location>
        <position position="272"/>
    </location>
</feature>
<feature type="modified residue" description="4-hydroxyproline" evidence="3">
    <location>
        <position position="284"/>
    </location>
</feature>
<feature type="modified residue" description="4-hydroxyproline" evidence="3">
    <location>
        <position position="293"/>
    </location>
</feature>
<feature type="modified residue" description="4-hydroxyproline" evidence="3">
    <location>
        <position position="308"/>
    </location>
</feature>
<feature type="modified residue" description="4-hydroxyproline" evidence="3">
    <location>
        <position position="314"/>
    </location>
</feature>
<feature type="modified residue" description="4-hydroxyproline" evidence="3">
    <location>
        <position position="323"/>
    </location>
</feature>
<feature type="modified residue" description="4-hydroxyproline" evidence="3">
    <location>
        <position position="329"/>
    </location>
</feature>
<feature type="modified residue" description="5-hydroxylysine" evidence="3">
    <location>
        <position position="338"/>
    </location>
</feature>
<feature type="modified residue" description="4-hydroxyproline" evidence="3">
    <location>
        <position position="347"/>
    </location>
</feature>
<feature type="modified residue" description="4-hydroxyproline" evidence="3">
    <location>
        <position position="356"/>
    </location>
</feature>
<feature type="modified residue" description="4-hydroxyproline" evidence="3">
    <location>
        <position position="362"/>
    </location>
</feature>
<feature type="modified residue" description="4-hydroxyproline" evidence="3">
    <location>
        <position position="368"/>
    </location>
</feature>
<feature type="modified residue" description="4-hydroxyproline" evidence="3">
    <location>
        <position position="377"/>
    </location>
</feature>
<feature type="modified residue" description="4-hydroxyproline" evidence="3">
    <location>
        <position position="380"/>
    </location>
</feature>
<feature type="modified residue" description="4-hydroxyproline" evidence="3">
    <location>
        <position position="389"/>
    </location>
</feature>
<feature type="modified residue" description="4-hydroxyproline" evidence="3">
    <location>
        <position position="398"/>
    </location>
</feature>
<feature type="modified residue" description="4-hydroxyproline" evidence="3">
    <location>
        <position position="404"/>
    </location>
</feature>
<feature type="modified residue" description="4-hydroxyproline" evidence="3">
    <location>
        <position position="416"/>
    </location>
</feature>
<feature type="modified residue" description="4-hydroxyproline" evidence="3">
    <location>
        <position position="425"/>
    </location>
</feature>
<feature type="modified residue" description="4-hydroxyproline" evidence="3">
    <location>
        <position position="434"/>
    </location>
</feature>
<feature type="modified residue" description="4-hydroxyproline" evidence="3">
    <location>
        <position position="437"/>
    </location>
</feature>
<feature type="modified residue" description="4-hydroxyproline" evidence="3">
    <location>
        <position position="455"/>
    </location>
</feature>
<feature type="modified residue" description="4-hydroxyproline" evidence="3">
    <location>
        <position position="472"/>
    </location>
</feature>
<feature type="modified residue" description="4-hydroxyproline" evidence="3">
    <location>
        <position position="478"/>
    </location>
</feature>
<feature type="modified residue" description="4-hydroxyproline" evidence="3">
    <location>
        <position position="484"/>
    </location>
</feature>
<feature type="modified residue" description="4-hydroxyproline" evidence="3">
    <location>
        <position position="490"/>
    </location>
</feature>
<feature type="modified residue" description="4-hydroxyproline" evidence="3">
    <location>
        <position position="496"/>
    </location>
</feature>
<feature type="modified residue" description="4-hydroxyproline" evidence="3">
    <location>
        <position position="502"/>
    </location>
</feature>
<feature type="modified residue" description="4-hydroxyproline" evidence="3">
    <location>
        <position position="514"/>
    </location>
</feature>
<feature type="modified residue" description="4-hydroxyproline" evidence="3">
    <location>
        <position position="523"/>
    </location>
</feature>
<feature type="modified residue" description="4-hydroxyproline" evidence="3">
    <location>
        <position position="537"/>
    </location>
</feature>
<feature type="modified residue" description="4-hydroxyproline" evidence="3">
    <location>
        <position position="543"/>
    </location>
</feature>
<feature type="modified residue" description="4-hydroxyproline" evidence="3">
    <location>
        <position position="552"/>
    </location>
</feature>
<feature type="modified residue" description="5-hydroxylysine" evidence="3">
    <location>
        <position position="564"/>
    </location>
</feature>
<feature type="modified residue" description="4-hydroxyproline" evidence="3">
    <location>
        <position position="570"/>
    </location>
</feature>
<feature type="modified residue" description="4-hydroxyproline" evidence="3">
    <location>
        <position position="585"/>
    </location>
</feature>
<feature type="modified residue" description="4-hydroxyproline" evidence="3">
    <location>
        <position position="591"/>
    </location>
</feature>
<feature type="modified residue" description="Phosphoserine" evidence="2">
    <location>
        <position position="600"/>
    </location>
</feature>
<feature type="modified residue" description="4-hydroxyproline" evidence="3">
    <location>
        <position position="612"/>
    </location>
</feature>
<feature type="modified residue" description="4-hydroxyproline" evidence="3">
    <location>
        <position position="618"/>
    </location>
</feature>
<feature type="modified residue" description="4-hydroxyproline" evidence="3">
    <location>
        <position position="621"/>
    </location>
</feature>
<feature type="modified residue" description="4-hydroxyproline" evidence="3">
    <location>
        <position position="630"/>
    </location>
</feature>
<feature type="modified residue" description="4-hydroxyproline" evidence="3">
    <location>
        <position position="636"/>
    </location>
</feature>
<feature type="modified residue" description="4-hydroxyproline" evidence="3">
    <location>
        <position position="654"/>
    </location>
</feature>
<feature type="modified residue" description="4-hydroxyproline" evidence="3">
    <location>
        <position position="663"/>
    </location>
</feature>
<feature type="modified residue" description="4-hydroxyproline" evidence="3">
    <location>
        <position position="672"/>
    </location>
</feature>
<feature type="modified residue" description="5-hydroxylysine" evidence="3">
    <location>
        <position position="675"/>
    </location>
</feature>
<feature type="modified residue" description="4-hydroxyproline" evidence="3">
    <location>
        <position position="684"/>
    </location>
</feature>
<feature type="modified residue" description="4-hydroxyproline" evidence="3">
    <location>
        <position position="690"/>
    </location>
</feature>
<feature type="modified residue" description="3-hydroxyproline" evidence="4">
    <location>
        <position position="698"/>
    </location>
</feature>
<feature type="modified residue" description="4-hydroxyproline" evidence="4">
    <location>
        <position position="699"/>
    </location>
</feature>
<feature type="modified residue" description="4-hydroxyproline" evidence="4">
    <location>
        <position position="708"/>
    </location>
</feature>
<feature type="modified residue" description="4-hydroxyproline" evidence="4">
    <location>
        <position position="711"/>
    </location>
</feature>
<feature type="modified residue" description="4-hydroxyproline" evidence="3">
    <location>
        <position position="732"/>
    </location>
</feature>
<feature type="modified residue" description="4-hydroxyproline" evidence="3">
    <location>
        <position position="741"/>
    </location>
</feature>
<feature type="modified residue" description="4-hydroxyproline" evidence="3">
    <location>
        <position position="749"/>
    </location>
</feature>
<feature type="modified residue" description="4-hydroxyproline" evidence="3">
    <location>
        <position position="758"/>
    </location>
</feature>
<feature type="modified residue" description="4-hydroxyproline" evidence="3">
    <location>
        <position position="776"/>
    </location>
</feature>
<feature type="modified residue" description="4-hydroxyproline" evidence="3">
    <location>
        <position position="785"/>
    </location>
</feature>
<feature type="modified residue" description="4-hydroxyproline" evidence="3">
    <location>
        <position position="788"/>
    </location>
</feature>
<feature type="modified residue" description="4-hydroxyproline" evidence="3">
    <location>
        <position position="794"/>
    </location>
</feature>
<feature type="modified residue" description="4-hydroxyproline" evidence="3">
    <location>
        <position position="809"/>
    </location>
</feature>
<feature type="modified residue" description="4-hydroxyproline" evidence="3">
    <location>
        <position position="815"/>
    </location>
</feature>
<feature type="modified residue" description="4-hydroxyproline" evidence="3">
    <location>
        <position position="821"/>
    </location>
</feature>
<feature type="modified residue" description="4-hydroxyproline" evidence="3">
    <location>
        <position position="830"/>
    </location>
</feature>
<feature type="modified residue" description="4-hydroxyproline" evidence="3">
    <location>
        <position position="836"/>
    </location>
</feature>
<feature type="modified residue" description="5-hydroxylysine" evidence="3">
    <location>
        <position position="845"/>
    </location>
</feature>
<feature type="modified residue" description="4-hydroxyproline" evidence="3">
    <location>
        <position position="856"/>
    </location>
</feature>
<feature type="modified residue" description="4-hydroxyproline" evidence="3">
    <location>
        <position position="859"/>
    </location>
</feature>
<feature type="modified residue" description="4-hydroxyproline" evidence="3">
    <location>
        <position position="862"/>
    </location>
</feature>
<feature type="modified residue" description="5-hydroxylysine" evidence="3">
    <location>
        <position position="907"/>
    </location>
</feature>
<feature type="modified residue" description="5-hydroxylysine; alternate" evidence="3">
    <location>
        <position position="919"/>
    </location>
</feature>
<feature type="modified residue" description="4-hydroxyproline" evidence="3">
    <location>
        <position position="934"/>
    </location>
</feature>
<feature type="modified residue" description="4-hydroxyproline" evidence="3">
    <location>
        <position position="937"/>
    </location>
</feature>
<feature type="modified residue" description="4-hydroxyproline" evidence="3">
    <location>
        <position position="955"/>
    </location>
</feature>
<feature type="modified residue" description="4-hydroxyproline" evidence="4">
    <location>
        <position position="970"/>
    </location>
</feature>
<feature type="modified residue" description="3-hydroxyproline" evidence="4">
    <location>
        <position position="975"/>
    </location>
</feature>
<feature type="modified residue" description="4-hydroxyproline" evidence="4">
    <location>
        <position position="976"/>
    </location>
</feature>
<feature type="modified residue" description="3-hydroxyproline" evidence="4">
    <location>
        <position position="990"/>
    </location>
</feature>
<feature type="modified residue" description="4-hydroxyproline" evidence="4">
    <location>
        <position position="991"/>
    </location>
</feature>
<feature type="modified residue" description="3-hydroxyproline" evidence="4">
    <location>
        <position position="993"/>
    </location>
</feature>
<feature type="modified residue" description="4-hydroxyproline" evidence="4">
    <location>
        <position position="994"/>
    </location>
</feature>
<feature type="modified residue" description="3-hydroxyproline" evidence="4">
    <location>
        <position position="996"/>
    </location>
</feature>
<feature type="modified residue" description="4-hydroxyproline" evidence="4">
    <location>
        <position position="997"/>
    </location>
</feature>
<feature type="glycosylation site" description="O-linked (Gal...) hydroxylysine; alternate" evidence="1">
    <location>
        <position position="98"/>
    </location>
</feature>
<feature type="glycosylation site" description="O-linked (Gal...) hydroxylysine; alternate" evidence="3">
    <location>
        <position position="919"/>
    </location>
</feature>
<feature type="unsure residue" description="L or I" evidence="7">
    <location>
        <position position="24"/>
    </location>
</feature>
<feature type="unsure residue" description="L or I" evidence="7">
    <location>
        <position position="88"/>
    </location>
</feature>
<feature type="unsure residue" description="L or I" evidence="7">
    <location>
        <position position="94"/>
    </location>
</feature>
<feature type="unsure residue" description="L or I" evidence="7">
    <location>
        <position position="106"/>
    </location>
</feature>
<feature type="unsure residue" description="L or I" evidence="7">
    <location>
        <position position="139"/>
    </location>
</feature>
<feature type="unsure residue" description="I or L" evidence="7">
    <location>
        <position position="238"/>
    </location>
</feature>
<feature type="unsure residue" description="I or L" evidence="7">
    <location>
        <position position="289"/>
    </location>
</feature>
<feature type="unsure residue" description="L or I" evidence="7">
    <location>
        <position position="313"/>
    </location>
</feature>
<feature type="unsure residue" description="L or I" evidence="7">
    <location>
        <position position="367"/>
    </location>
</feature>
<feature type="unsure residue" description="L or I" evidence="7">
    <location>
        <position position="373"/>
    </location>
</feature>
<feature type="unsure residue" description="L or I" evidence="7">
    <location>
        <position position="477"/>
    </location>
</feature>
<feature type="unsure residue" description="L or I" evidence="7">
    <location>
        <position position="499"/>
    </location>
</feature>
<feature type="unsure residue" description="L or I" evidence="7">
    <location>
        <position position="539"/>
    </location>
</feature>
<feature type="unsure residue" description="L or I" evidence="7">
    <location>
        <position position="551"/>
    </location>
</feature>
<feature type="unsure residue" description="L or I" evidence="7">
    <location>
        <position position="578"/>
    </location>
</feature>
<feature type="unsure residue" description="I or L" evidence="7">
    <location>
        <position position="582"/>
    </location>
</feature>
<feature type="unsure residue" description="I or L" evidence="7">
    <location>
        <position position="666"/>
    </location>
</feature>
<feature type="unsure residue" description="I or L" evidence="7">
    <location>
        <position position="766"/>
    </location>
</feature>
<feature type="unsure residue" description="L or I" evidence="7">
    <location>
        <position position="775"/>
    </location>
</feature>
<feature type="unsure residue" description="L or I" evidence="7">
    <location>
        <position position="787"/>
    </location>
</feature>
<feature type="unsure residue" description="L or I" evidence="7">
    <location>
        <position position="817"/>
    </location>
</feature>
<feature type="unsure residue" description="I or L" evidence="7">
    <location>
        <position position="918"/>
    </location>
</feature>
<feature type="unsure residue" description="L or I" evidence="7">
    <location>
        <position position="927"/>
    </location>
</feature>
<feature type="unsure residue" description="L or I" evidence="7">
    <location>
        <position position="966"/>
    </location>
</feature>
<feature type="unsure residue" description="L or I" evidence="7">
    <location>
        <position position="969"/>
    </location>
</feature>
<feature type="unsure residue" description="I or L" evidence="7">
    <location>
        <position position="973"/>
    </location>
</feature>
<feature type="non-consecutive residues" evidence="7">
    <location>
        <begin position="7"/>
        <end position="8"/>
    </location>
</feature>
<feature type="non-consecutive residues" evidence="7">
    <location>
        <begin position="29"/>
        <end position="30"/>
    </location>
</feature>
<feature type="non-consecutive residues" evidence="7">
    <location>
        <begin position="46"/>
        <end position="47"/>
    </location>
</feature>
<feature type="non-consecutive residues" evidence="7">
    <location>
        <begin position="471"/>
        <end position="472"/>
    </location>
</feature>
<feature type="non-consecutive residues" evidence="7">
    <location>
        <begin position="530"/>
        <end position="531"/>
    </location>
</feature>
<feature type="non-consecutive residues" evidence="7">
    <location>
        <begin position="532"/>
        <end position="533"/>
    </location>
</feature>
<feature type="non-consecutive residues" evidence="7">
    <location>
        <begin position="743"/>
        <end position="744"/>
    </location>
</feature>
<feature type="non-consecutive residues" evidence="7">
    <location>
        <begin position="853"/>
        <end position="854"/>
    </location>
</feature>
<feature type="non-terminal residue" evidence="7">
    <location>
        <position position="1"/>
    </location>
</feature>
<feature type="non-terminal residue" evidence="7">
    <location>
        <position position="998"/>
    </location>
</feature>
<protein>
    <recommendedName>
        <fullName evidence="7">Collagen alpha-1(I) chain</fullName>
    </recommendedName>
    <alternativeName>
        <fullName evidence="1">Alpha-1 type I collagen</fullName>
    </alternativeName>
</protein>
<organism evidence="7">
    <name type="scientific">Nothrotheriops shastensis</name>
    <name type="common">Shasta ground sloth</name>
    <dbReference type="NCBI Taxonomy" id="136416"/>
    <lineage>
        <taxon>Eukaryota</taxon>
        <taxon>Metazoa</taxon>
        <taxon>Chordata</taxon>
        <taxon>Craniata</taxon>
        <taxon>Vertebrata</taxon>
        <taxon>Euteleostomi</taxon>
        <taxon>Mammalia</taxon>
        <taxon>Eutheria</taxon>
        <taxon>Xenarthra</taxon>
        <taxon>Pilosa</taxon>
        <taxon>Folivora</taxon>
        <taxon>Megatheriidae</taxon>
        <taxon>Nothrotheriops</taxon>
    </lineage>
</organism>
<accession>C0HLJ3</accession>
<name>CO1A1_NOTSH</name>
<keyword id="KW-0903">Direct protein sequencing</keyword>
<keyword id="KW-0952">Extinct organism protein</keyword>
<keyword id="KW-0272">Extracellular matrix</keyword>
<keyword id="KW-0325">Glycoprotein</keyword>
<keyword id="KW-0379">Hydroxylation</keyword>
<keyword id="KW-0597">Phosphoprotein</keyword>
<keyword id="KW-0964">Secreted</keyword>
<dbReference type="GO" id="GO:0005576">
    <property type="term" value="C:extracellular region"/>
    <property type="evidence" value="ECO:0007669"/>
    <property type="project" value="UniProtKB-SubCell"/>
</dbReference>
<dbReference type="InterPro" id="IPR008160">
    <property type="entry name" value="Collagen"/>
</dbReference>
<dbReference type="InterPro" id="IPR050938">
    <property type="entry name" value="Collagen_Structural_Proteins"/>
</dbReference>
<dbReference type="PANTHER" id="PTHR37456:SF6">
    <property type="entry name" value="COLLAGEN ALPHA-1(XXIII) CHAIN-LIKE ISOFORM X2"/>
    <property type="match status" value="1"/>
</dbReference>
<dbReference type="PANTHER" id="PTHR37456">
    <property type="entry name" value="SI:CH211-266K2.1"/>
    <property type="match status" value="1"/>
</dbReference>
<dbReference type="Pfam" id="PF01391">
    <property type="entry name" value="Collagen"/>
    <property type="match status" value="13"/>
</dbReference>
<sequence length="998" mass="89146">SYGYDEKGGVSVPGPMGPSGPRGLPGPPGPGPQGFQGPPGEPGEPGSGPMGPRGPPGPPGKNGDDGEAGKPGRPGERGPPGPQGARGLPGTAGLPGMKGHRGFSGLDGAKGDAGPAGPKGEPGSPGENGAPGQMGPRGLPGERGRPGASGPAGARGNDGATGAAGPPGPTGPAGPPGFPGAVGAKGEAGPQGARGSEGPQGVRGEPGPPGPAGAAGPAGNPGADGQPGAKGANGAPGIAGAPGFPGARGPSGPQGPSGPPGPKGNSGEPGAPGSKGDTGAKGEPGPTGIQGPPGPAGEEGKRGARGEPGPTGLPGPPGERGGPGSRGFPGADGVAGPKGPAGERGSPGPAGPKGSPGEAGRPGEAGLPGAKGLTGSPGSPGPDGKTGPPGPAGQDGRPGPPGPPGARGQAGVMGFPGPKGAAGEPGKAGERGVPGPPGAVGPAGKDGEAGAQGPPGPAGPAGERGEQGPAGPGFQGLPGPAGPPGEAGKPGEQGVPGDLGAPGPSGARGERGFPGERGVQGPPGPAGPRGNGSQGAPGLQGMPGERGAAGLPGPKGDRGDAGPKGADGAPGKDGVRGLTGPIGPPGPAGAPGDKGESGPSGPAGPTGARGAPGDRGEPGPPGPAGFAGPPGADGQPGAKGEPGDAGAKGDAGPPGPAGPTGPPGPIGNVGAPGPKGARGSAGPPGATGFPGAAGRVGPPGPSGNAGPPGPPGPVGKEGGKGPRGETGPAGRPGEVGPPGPPGPGEKGSPGADGPAGAPGTPGPQGISGQRGVVGLPGQRGERGFPGLPGPSGEPGKQGPSGSSGERGPPGPMGPPGLAGPPGESGREGAPGAEGSPGRDGSPGPKGDRGETGPGPPGAPGAPGAPGPVGPAGKNGDRGETGPAGPAGPAGPAGARGPAGPQGPRGDKGETGEQGDRGIKGHRGFSGLQGPAGPPGSPGEQGPSGASGPAGPRGPPGSAGSPGKDGLNGLPGPIGPPGPRGRTGDAGPVGPPGPPGPPG</sequence>
<reference evidence="8" key="1">
    <citation type="journal article" date="2019" name="Nat. Ecol. Evol.">
        <title>Palaeoproteomics resolves sloth relationships.</title>
        <authorList>
            <person name="Presslee S."/>
            <person name="Slater G.J."/>
            <person name="Pujos F."/>
            <person name="Forasiepi A.M."/>
            <person name="Fischer R."/>
            <person name="Molloy K."/>
            <person name="Mackie M."/>
            <person name="Olsen J.V."/>
            <person name="Kramarz A."/>
            <person name="Taglioretti M."/>
            <person name="Scaglia F."/>
            <person name="Lezcano M."/>
            <person name="Lanata J.L."/>
            <person name="Southon J."/>
            <person name="Feranec R."/>
            <person name="Bloch J."/>
            <person name="Hajduk A."/>
            <person name="Martin F.M."/>
            <person name="Salas Gismondi R."/>
            <person name="Reguero M."/>
            <person name="de Muizon C."/>
            <person name="Greenwood A."/>
            <person name="Chait B.T."/>
            <person name="Penkman K."/>
            <person name="Collins M."/>
            <person name="MacPhee R.D.E."/>
        </authorList>
    </citation>
    <scope>PROTEIN SEQUENCE</scope>
    <scope>TISSUE SPECIFICITY</scope>
    <scope>IDENTIFICATION BY MASS SPECTROMETRY</scope>
    <source>
        <tissue evidence="7">Bone</tissue>
    </source>
</reference>
<evidence type="ECO:0000250" key="1">
    <source>
        <dbReference type="UniProtKB" id="P02452"/>
    </source>
</evidence>
<evidence type="ECO:0000250" key="2">
    <source>
        <dbReference type="UniProtKB" id="P02454"/>
    </source>
</evidence>
<evidence type="ECO:0000250" key="3">
    <source>
        <dbReference type="UniProtKB" id="P02457"/>
    </source>
</evidence>
<evidence type="ECO:0000250" key="4">
    <source>
        <dbReference type="UniProtKB" id="P11087"/>
    </source>
</evidence>
<evidence type="ECO:0000256" key="5">
    <source>
        <dbReference type="SAM" id="MobiDB-lite"/>
    </source>
</evidence>
<evidence type="ECO:0000269" key="6">
    <source>
    </source>
</evidence>
<evidence type="ECO:0000303" key="7">
    <source>
    </source>
</evidence>
<evidence type="ECO:0000305" key="8"/>
<comment type="function">
    <text evidence="8">Type I collagen is a member of group I collagen (fibrillar forming collagen).</text>
</comment>
<comment type="subunit">
    <text evidence="8">Trimers of one alpha 2(I) and two alpha 1(I) chains.</text>
</comment>
<comment type="subcellular location">
    <subcellularLocation>
        <location>Secreted</location>
    </subcellularLocation>
    <subcellularLocation>
        <location>Secreted</location>
        <location>Extracellular space</location>
    </subcellularLocation>
    <subcellularLocation>
        <location evidence="8">Secreted</location>
        <location evidence="8">Extracellular space</location>
        <location evidence="8">Extracellular matrix</location>
    </subcellularLocation>
</comment>
<comment type="tissue specificity">
    <text evidence="6">Expressed in bones.</text>
</comment>
<comment type="PTM">
    <text evidence="1">Contains mostly 4-hydroxyproline. Proline residues at the third position of the tripeptide repeating unit (G-X-Y) are hydroxylated in some or all of the chains.</text>
</comment>
<comment type="PTM">
    <text evidence="4">Contains 3-hydroxyproline at a few sites. This modification occurs on the first proline residue in the sequence motif Gly-Pro-Hyp, where Hyp is 4-hydroxyproline.</text>
</comment>
<comment type="PTM">
    <text evidence="1">Lysine residues at the third position of the tripeptide repeating unit (G-X-Y) are 5-hydroxylated in some or all of the chains.</text>
</comment>
<comment type="PTM">
    <text evidence="1">O-glycosylated on hydroxylated lysine residues. The O-linked glycan consists of a Glc-Gal disaccharide.</text>
</comment>
<comment type="miscellaneous">
    <text evidence="6">These protein fragments were extracted from ancient femur bone collected at Rampart Cave in Arizona.</text>
</comment>
<comment type="similarity">
    <text evidence="8">Belongs to the fibrillar collagen family.</text>
</comment>